<organism>
    <name type="scientific">Escherichia coli O81 (strain ED1a)</name>
    <dbReference type="NCBI Taxonomy" id="585397"/>
    <lineage>
        <taxon>Bacteria</taxon>
        <taxon>Pseudomonadati</taxon>
        <taxon>Pseudomonadota</taxon>
        <taxon>Gammaproteobacteria</taxon>
        <taxon>Enterobacterales</taxon>
        <taxon>Enterobacteriaceae</taxon>
        <taxon>Escherichia</taxon>
    </lineage>
</organism>
<sequence length="432" mass="47633">MRVVILGSGVVGVASAWYLNQAGHEVTVIDREPGAALETSAANAGQISPGYAAPWAAPGVPLKAIKWMFQRHAPLAVRLDGTQFQLKWMWQMLRNCDTSHYMENKGRMVRLAEYSRDCLKALRAETNIQYEGRQGGTLQLFRTEQQYENATRDIAVLEDAGVPYQLLESSRLAEVEPALAEVAHKLTGGLQLPNDETGDCQLFTQNLARMAEQAGVKFRFNTPVDQLLCDGEQIYGVKCGDEVIKADAYVMAFGSYSTAMLKGIVDIPVYPLKGYSLTIPIAQEDGAPVSTILDETYKIAITRFDNRIRVGGMAEIVGFNTELLQPRRETLEMVVRDLYPRGGHVEQATFWTGLRPMTPDGTPVVGRTRFKNLWLNTGHGTLGWTMACGSGQLLSDLLSGRTPAIPYEDLSVARYSRGFTPLRPGHLHGAHS</sequence>
<comment type="function">
    <text evidence="1">Oxidative deamination of D-amino acids.</text>
</comment>
<comment type="catalytic activity">
    <reaction evidence="1">
        <text>a D-alpha-amino acid + A + H2O = a 2-oxocarboxylate + AH2 + NH4(+)</text>
        <dbReference type="Rhea" id="RHEA:18125"/>
        <dbReference type="ChEBI" id="CHEBI:13193"/>
        <dbReference type="ChEBI" id="CHEBI:15377"/>
        <dbReference type="ChEBI" id="CHEBI:17499"/>
        <dbReference type="ChEBI" id="CHEBI:28938"/>
        <dbReference type="ChEBI" id="CHEBI:35179"/>
        <dbReference type="ChEBI" id="CHEBI:59871"/>
    </reaction>
</comment>
<comment type="cofactor">
    <cofactor evidence="1">
        <name>FAD</name>
        <dbReference type="ChEBI" id="CHEBI:57692"/>
    </cofactor>
</comment>
<comment type="pathway">
    <text>Amino-acid degradation; D-alanine degradation; NH(3) and pyruvate from D-alanine: step 1/1.</text>
</comment>
<comment type="similarity">
    <text evidence="1">Belongs to the DadA oxidoreductase family.</text>
</comment>
<evidence type="ECO:0000255" key="1">
    <source>
        <dbReference type="HAMAP-Rule" id="MF_01202"/>
    </source>
</evidence>
<dbReference type="EC" id="1.4.99.-" evidence="1"/>
<dbReference type="EMBL" id="CU928162">
    <property type="protein sequence ID" value="CAR07531.1"/>
    <property type="molecule type" value="Genomic_DNA"/>
</dbReference>
<dbReference type="RefSeq" id="WP_001266907.1">
    <property type="nucleotide sequence ID" value="NC_011745.1"/>
</dbReference>
<dbReference type="SMR" id="B7MTW7"/>
<dbReference type="KEGG" id="ecq:ECED1_1331"/>
<dbReference type="HOGENOM" id="CLU_007884_9_2_6"/>
<dbReference type="UniPathway" id="UPA00043">
    <property type="reaction ID" value="UER00498"/>
</dbReference>
<dbReference type="Proteomes" id="UP000000748">
    <property type="component" value="Chromosome"/>
</dbReference>
<dbReference type="GO" id="GO:0005737">
    <property type="term" value="C:cytoplasm"/>
    <property type="evidence" value="ECO:0007669"/>
    <property type="project" value="TreeGrafter"/>
</dbReference>
<dbReference type="GO" id="GO:0005886">
    <property type="term" value="C:plasma membrane"/>
    <property type="evidence" value="ECO:0007669"/>
    <property type="project" value="TreeGrafter"/>
</dbReference>
<dbReference type="GO" id="GO:0008718">
    <property type="term" value="F:D-amino-acid dehydrogenase activity"/>
    <property type="evidence" value="ECO:0007669"/>
    <property type="project" value="UniProtKB-UniRule"/>
</dbReference>
<dbReference type="GO" id="GO:0055130">
    <property type="term" value="P:D-alanine catabolic process"/>
    <property type="evidence" value="ECO:0007669"/>
    <property type="project" value="UniProtKB-UniPathway"/>
</dbReference>
<dbReference type="FunFam" id="3.50.50.60:FF:000020">
    <property type="entry name" value="D-amino acid dehydrogenase"/>
    <property type="match status" value="1"/>
</dbReference>
<dbReference type="Gene3D" id="3.30.9.10">
    <property type="entry name" value="D-Amino Acid Oxidase, subunit A, domain 2"/>
    <property type="match status" value="1"/>
</dbReference>
<dbReference type="Gene3D" id="3.50.50.60">
    <property type="entry name" value="FAD/NAD(P)-binding domain"/>
    <property type="match status" value="2"/>
</dbReference>
<dbReference type="HAMAP" id="MF_01202">
    <property type="entry name" value="DadA"/>
    <property type="match status" value="1"/>
</dbReference>
<dbReference type="InterPro" id="IPR023080">
    <property type="entry name" value="DadA"/>
</dbReference>
<dbReference type="InterPro" id="IPR006076">
    <property type="entry name" value="FAD-dep_OxRdtase"/>
</dbReference>
<dbReference type="InterPro" id="IPR036188">
    <property type="entry name" value="FAD/NAD-bd_sf"/>
</dbReference>
<dbReference type="NCBIfam" id="NF001933">
    <property type="entry name" value="PRK00711.1"/>
    <property type="match status" value="1"/>
</dbReference>
<dbReference type="PANTHER" id="PTHR13847:SF280">
    <property type="entry name" value="D-AMINO ACID DEHYDROGENASE"/>
    <property type="match status" value="1"/>
</dbReference>
<dbReference type="PANTHER" id="PTHR13847">
    <property type="entry name" value="SARCOSINE DEHYDROGENASE-RELATED"/>
    <property type="match status" value="1"/>
</dbReference>
<dbReference type="Pfam" id="PF01266">
    <property type="entry name" value="DAO"/>
    <property type="match status" value="1"/>
</dbReference>
<dbReference type="SUPFAM" id="SSF54373">
    <property type="entry name" value="FAD-linked reductases, C-terminal domain"/>
    <property type="match status" value="1"/>
</dbReference>
<dbReference type="SUPFAM" id="SSF51905">
    <property type="entry name" value="FAD/NAD(P)-binding domain"/>
    <property type="match status" value="1"/>
</dbReference>
<name>DADA_ECO81</name>
<accession>B7MTW7</accession>
<keyword id="KW-0274">FAD</keyword>
<keyword id="KW-0285">Flavoprotein</keyword>
<keyword id="KW-0560">Oxidoreductase</keyword>
<proteinExistence type="inferred from homology"/>
<reference key="1">
    <citation type="journal article" date="2009" name="PLoS Genet.">
        <title>Organised genome dynamics in the Escherichia coli species results in highly diverse adaptive paths.</title>
        <authorList>
            <person name="Touchon M."/>
            <person name="Hoede C."/>
            <person name="Tenaillon O."/>
            <person name="Barbe V."/>
            <person name="Baeriswyl S."/>
            <person name="Bidet P."/>
            <person name="Bingen E."/>
            <person name="Bonacorsi S."/>
            <person name="Bouchier C."/>
            <person name="Bouvet O."/>
            <person name="Calteau A."/>
            <person name="Chiapello H."/>
            <person name="Clermont O."/>
            <person name="Cruveiller S."/>
            <person name="Danchin A."/>
            <person name="Diard M."/>
            <person name="Dossat C."/>
            <person name="Karoui M.E."/>
            <person name="Frapy E."/>
            <person name="Garry L."/>
            <person name="Ghigo J.M."/>
            <person name="Gilles A.M."/>
            <person name="Johnson J."/>
            <person name="Le Bouguenec C."/>
            <person name="Lescat M."/>
            <person name="Mangenot S."/>
            <person name="Martinez-Jehanne V."/>
            <person name="Matic I."/>
            <person name="Nassif X."/>
            <person name="Oztas S."/>
            <person name="Petit M.A."/>
            <person name="Pichon C."/>
            <person name="Rouy Z."/>
            <person name="Ruf C.S."/>
            <person name="Schneider D."/>
            <person name="Tourret J."/>
            <person name="Vacherie B."/>
            <person name="Vallenet D."/>
            <person name="Medigue C."/>
            <person name="Rocha E.P.C."/>
            <person name="Denamur E."/>
        </authorList>
    </citation>
    <scope>NUCLEOTIDE SEQUENCE [LARGE SCALE GENOMIC DNA]</scope>
    <source>
        <strain>ED1a</strain>
    </source>
</reference>
<protein>
    <recommendedName>
        <fullName evidence="1">D-amino acid dehydrogenase</fullName>
        <ecNumber evidence="1">1.4.99.-</ecNumber>
    </recommendedName>
</protein>
<gene>
    <name evidence="1" type="primary">dadA</name>
    <name type="ordered locus">ECED1_1331</name>
</gene>
<feature type="chain" id="PRO_1000164641" description="D-amino acid dehydrogenase">
    <location>
        <begin position="1"/>
        <end position="432"/>
    </location>
</feature>
<feature type="binding site" evidence="1">
    <location>
        <begin position="3"/>
        <end position="17"/>
    </location>
    <ligand>
        <name>FAD</name>
        <dbReference type="ChEBI" id="CHEBI:57692"/>
    </ligand>
</feature>